<gene>
    <name type="primary">folK</name>
    <name type="ordered locus">SPy_1100</name>
    <name type="ordered locus">M5005_Spy0824</name>
</gene>
<reference key="1">
    <citation type="journal article" date="2001" name="Proc. Natl. Acad. Sci. U.S.A.">
        <title>Complete genome sequence of an M1 strain of Streptococcus pyogenes.</title>
        <authorList>
            <person name="Ferretti J.J."/>
            <person name="McShan W.M."/>
            <person name="Ajdic D.J."/>
            <person name="Savic D.J."/>
            <person name="Savic G."/>
            <person name="Lyon K."/>
            <person name="Primeaux C."/>
            <person name="Sezate S."/>
            <person name="Suvorov A.N."/>
            <person name="Kenton S."/>
            <person name="Lai H.S."/>
            <person name="Lin S.P."/>
            <person name="Qian Y."/>
            <person name="Jia H.G."/>
            <person name="Najar F.Z."/>
            <person name="Ren Q."/>
            <person name="Zhu H."/>
            <person name="Song L."/>
            <person name="White J."/>
            <person name="Yuan X."/>
            <person name="Clifton S.W."/>
            <person name="Roe B.A."/>
            <person name="McLaughlin R.E."/>
        </authorList>
    </citation>
    <scope>NUCLEOTIDE SEQUENCE [LARGE SCALE GENOMIC DNA]</scope>
    <source>
        <strain>ATCC 700294 / SF370 / Serotype M1</strain>
    </source>
</reference>
<reference key="2">
    <citation type="journal article" date="2005" name="J. Infect. Dis.">
        <title>Evolutionary origin and emergence of a highly successful clone of serotype M1 group A Streptococcus involved multiple horizontal gene transfer events.</title>
        <authorList>
            <person name="Sumby P."/>
            <person name="Porcella S.F."/>
            <person name="Madrigal A.G."/>
            <person name="Barbian K.D."/>
            <person name="Virtaneva K."/>
            <person name="Ricklefs S.M."/>
            <person name="Sturdevant D.E."/>
            <person name="Graham M.R."/>
            <person name="Vuopio-Varkila J."/>
            <person name="Hoe N.P."/>
            <person name="Musser J.M."/>
        </authorList>
    </citation>
    <scope>NUCLEOTIDE SEQUENCE [LARGE SCALE GENOMIC DNA]</scope>
    <source>
        <strain>ATCC BAA-947 / MGAS5005 / Serotype M1</strain>
    </source>
</reference>
<protein>
    <recommendedName>
        <fullName evidence="1">2-amino-4-hydroxy-6-hydroxymethyldihydropteridine pyrophosphokinase</fullName>
        <ecNumber evidence="1">2.7.6.3</ecNumber>
    </recommendedName>
    <alternativeName>
        <fullName evidence="1">6-hydroxymethyl-7,8-dihydropterin pyrophosphokinase</fullName>
        <shortName evidence="1">PPPK</shortName>
    </alternativeName>
    <alternativeName>
        <fullName evidence="1">7,8-dihydro-6-hydroxymethylpterin-pyrophosphokinase</fullName>
        <shortName evidence="1">HPPK</shortName>
    </alternativeName>
</protein>
<name>HPPK_STRP1</name>
<keyword id="KW-0067">ATP-binding</keyword>
<keyword id="KW-0289">Folate biosynthesis</keyword>
<keyword id="KW-0418">Kinase</keyword>
<keyword id="KW-0547">Nucleotide-binding</keyword>
<keyword id="KW-1185">Reference proteome</keyword>
<keyword id="KW-0808">Transferase</keyword>
<accession>P0C0G3</accession>
<accession>O33726</accession>
<accession>Q48YY0</accession>
<organism>
    <name type="scientific">Streptococcus pyogenes serotype M1</name>
    <dbReference type="NCBI Taxonomy" id="301447"/>
    <lineage>
        <taxon>Bacteria</taxon>
        <taxon>Bacillati</taxon>
        <taxon>Bacillota</taxon>
        <taxon>Bacilli</taxon>
        <taxon>Lactobacillales</taxon>
        <taxon>Streptococcaceae</taxon>
        <taxon>Streptococcus</taxon>
    </lineage>
</organism>
<sequence>MTIVYLSLGTNMGDRAAYLQKALEALADLPQTRLLAQSSIYETTAWGKTGQADFLNMACQLDTQLTAADFLKETQAIEQSLGRVRHEKWGSRTIDIDILLFGEEVYDTKELKVPHPYMTERAFVLIPLLELQPDLKLPPNHKFLRDYLAALDQSDITLFSAQQTEF</sequence>
<dbReference type="EC" id="2.7.6.3" evidence="1"/>
<dbReference type="EMBL" id="AE004092">
    <property type="protein sequence ID" value="AAK33978.1"/>
    <property type="molecule type" value="Genomic_DNA"/>
</dbReference>
<dbReference type="EMBL" id="CP000017">
    <property type="protein sequence ID" value="AAZ51442.1"/>
    <property type="molecule type" value="Genomic_DNA"/>
</dbReference>
<dbReference type="RefSeq" id="NP_269257.1">
    <property type="nucleotide sequence ID" value="NC_002737.2"/>
</dbReference>
<dbReference type="SMR" id="P0C0G3"/>
<dbReference type="PaxDb" id="1314-HKU360_00889"/>
<dbReference type="KEGG" id="spy:SPy_1100"/>
<dbReference type="KEGG" id="spz:M5005_Spy0824"/>
<dbReference type="PATRIC" id="fig|160490.10.peg.956"/>
<dbReference type="HOGENOM" id="CLU_097916_1_2_9"/>
<dbReference type="OMA" id="TLPHPKW"/>
<dbReference type="UniPathway" id="UPA00077">
    <property type="reaction ID" value="UER00155"/>
</dbReference>
<dbReference type="Proteomes" id="UP000000750">
    <property type="component" value="Chromosome"/>
</dbReference>
<dbReference type="GO" id="GO:0003848">
    <property type="term" value="F:2-amino-4-hydroxy-6-hydroxymethyldihydropteridine diphosphokinase activity"/>
    <property type="evidence" value="ECO:0007669"/>
    <property type="project" value="UniProtKB-EC"/>
</dbReference>
<dbReference type="GO" id="GO:0005524">
    <property type="term" value="F:ATP binding"/>
    <property type="evidence" value="ECO:0007669"/>
    <property type="project" value="UniProtKB-KW"/>
</dbReference>
<dbReference type="GO" id="GO:0016301">
    <property type="term" value="F:kinase activity"/>
    <property type="evidence" value="ECO:0007669"/>
    <property type="project" value="UniProtKB-KW"/>
</dbReference>
<dbReference type="GO" id="GO:0046656">
    <property type="term" value="P:folic acid biosynthetic process"/>
    <property type="evidence" value="ECO:0007669"/>
    <property type="project" value="UniProtKB-KW"/>
</dbReference>
<dbReference type="GO" id="GO:0046654">
    <property type="term" value="P:tetrahydrofolate biosynthetic process"/>
    <property type="evidence" value="ECO:0007669"/>
    <property type="project" value="UniProtKB-UniPathway"/>
</dbReference>
<dbReference type="CDD" id="cd00483">
    <property type="entry name" value="HPPK"/>
    <property type="match status" value="1"/>
</dbReference>
<dbReference type="Gene3D" id="3.30.70.560">
    <property type="entry name" value="7,8-Dihydro-6-hydroxymethylpterin-pyrophosphokinase HPPK"/>
    <property type="match status" value="1"/>
</dbReference>
<dbReference type="InterPro" id="IPR000550">
    <property type="entry name" value="Hppk"/>
</dbReference>
<dbReference type="InterPro" id="IPR035907">
    <property type="entry name" value="Hppk_sf"/>
</dbReference>
<dbReference type="NCBIfam" id="TIGR01498">
    <property type="entry name" value="folK"/>
    <property type="match status" value="1"/>
</dbReference>
<dbReference type="PANTHER" id="PTHR43071">
    <property type="entry name" value="2-AMINO-4-HYDROXY-6-HYDROXYMETHYLDIHYDROPTERIDINE PYROPHOSPHOKINASE"/>
    <property type="match status" value="1"/>
</dbReference>
<dbReference type="PANTHER" id="PTHR43071:SF1">
    <property type="entry name" value="2-AMINO-4-HYDROXY-6-HYDROXYMETHYLDIHYDROPTERIDINE PYROPHOSPHOKINASE"/>
    <property type="match status" value="1"/>
</dbReference>
<dbReference type="Pfam" id="PF01288">
    <property type="entry name" value="HPPK"/>
    <property type="match status" value="1"/>
</dbReference>
<dbReference type="SUPFAM" id="SSF55083">
    <property type="entry name" value="6-hydroxymethyl-7,8-dihydropterin pyrophosphokinase, HPPK"/>
    <property type="match status" value="1"/>
</dbReference>
<dbReference type="PROSITE" id="PS00794">
    <property type="entry name" value="HPPK"/>
    <property type="match status" value="1"/>
</dbReference>
<comment type="function">
    <text evidence="1">Catalyzes the transfer of pyrophosphate from adenosine triphosphate (ATP) to 6-hydroxymethyl-7,8-dihydropterin, an enzymatic step in folate biosynthesis pathway.</text>
</comment>
<comment type="catalytic activity">
    <reaction evidence="1">
        <text>6-hydroxymethyl-7,8-dihydropterin + ATP = (7,8-dihydropterin-6-yl)methyl diphosphate + AMP + H(+)</text>
        <dbReference type="Rhea" id="RHEA:11412"/>
        <dbReference type="ChEBI" id="CHEBI:15378"/>
        <dbReference type="ChEBI" id="CHEBI:30616"/>
        <dbReference type="ChEBI" id="CHEBI:44841"/>
        <dbReference type="ChEBI" id="CHEBI:72950"/>
        <dbReference type="ChEBI" id="CHEBI:456215"/>
        <dbReference type="EC" id="2.7.6.3"/>
    </reaction>
</comment>
<comment type="pathway">
    <text evidence="1">Cofactor biosynthesis; tetrahydrofolate biosynthesis; 2-amino-4-hydroxy-6-hydroxymethyl-7,8-dihydropteridine diphosphate from 7,8-dihydroneopterin triphosphate: step 4/4.</text>
</comment>
<comment type="similarity">
    <text evidence="2">Belongs to the HPPK family.</text>
</comment>
<proteinExistence type="inferred from homology"/>
<evidence type="ECO:0000250" key="1">
    <source>
        <dbReference type="UniProtKB" id="P26281"/>
    </source>
</evidence>
<evidence type="ECO:0000305" key="2"/>
<feature type="chain" id="PRO_0000168260" description="2-amino-4-hydroxy-6-hydroxymethyldihydropteridine pyrophosphokinase">
    <location>
        <begin position="1"/>
        <end position="166"/>
    </location>
</feature>